<accession>P37880</accession>
<dbReference type="EC" id="6.1.1.19" evidence="1"/>
<dbReference type="EMBL" id="X63415">
    <property type="protein sequence ID" value="CAA45012.1"/>
    <property type="molecule type" value="mRNA"/>
</dbReference>
<dbReference type="RefSeq" id="XP_007632694.1">
    <property type="nucleotide sequence ID" value="XM_007634504.2"/>
</dbReference>
<dbReference type="SMR" id="P37880"/>
<dbReference type="PaxDb" id="10029-XP_007632694.1"/>
<dbReference type="Ensembl" id="ENSCGRT00001003508.1">
    <molecule id="P37880-1"/>
    <property type="protein sequence ID" value="ENSCGRP00001002597.1"/>
    <property type="gene ID" value="ENSCGRG00001002920.1"/>
</dbReference>
<dbReference type="eggNOG" id="KOG4426">
    <property type="taxonomic scope" value="Eukaryota"/>
</dbReference>
<dbReference type="GeneTree" id="ENSGT00530000063407"/>
<dbReference type="OrthoDB" id="68056at2759"/>
<dbReference type="SABIO-RK" id="P37880"/>
<dbReference type="Proteomes" id="UP000694386">
    <property type="component" value="Unplaced"/>
</dbReference>
<dbReference type="Proteomes" id="UP001108280">
    <property type="component" value="Unplaced"/>
</dbReference>
<dbReference type="GO" id="GO:0017101">
    <property type="term" value="C:aminoacyl-tRNA synthetase multienzyme complex"/>
    <property type="evidence" value="ECO:0000250"/>
    <property type="project" value="UniProtKB"/>
</dbReference>
<dbReference type="GO" id="GO:0005829">
    <property type="term" value="C:cytosol"/>
    <property type="evidence" value="ECO:0000250"/>
    <property type="project" value="UniProtKB"/>
</dbReference>
<dbReference type="GO" id="GO:0005730">
    <property type="term" value="C:nucleolus"/>
    <property type="evidence" value="ECO:0007669"/>
    <property type="project" value="Ensembl"/>
</dbReference>
<dbReference type="GO" id="GO:0005654">
    <property type="term" value="C:nucleoplasm"/>
    <property type="evidence" value="ECO:0007669"/>
    <property type="project" value="Ensembl"/>
</dbReference>
<dbReference type="GO" id="GO:0004814">
    <property type="term" value="F:arginine-tRNA ligase activity"/>
    <property type="evidence" value="ECO:0000250"/>
    <property type="project" value="UniProtKB"/>
</dbReference>
<dbReference type="GO" id="GO:0005524">
    <property type="term" value="F:ATP binding"/>
    <property type="evidence" value="ECO:0007669"/>
    <property type="project" value="UniProtKB-KW"/>
</dbReference>
<dbReference type="GO" id="GO:0006420">
    <property type="term" value="P:arginyl-tRNA aminoacylation"/>
    <property type="evidence" value="ECO:0000250"/>
    <property type="project" value="UniProtKB"/>
</dbReference>
<dbReference type="CDD" id="cd00671">
    <property type="entry name" value="ArgRS_core"/>
    <property type="match status" value="1"/>
</dbReference>
<dbReference type="FunFam" id="1.10.730.10:FF:000016">
    <property type="entry name" value="Arginine--tRNA ligase, cytoplasmic"/>
    <property type="match status" value="1"/>
</dbReference>
<dbReference type="FunFam" id="3.30.1360.70:FF:000002">
    <property type="entry name" value="arginine--tRNA ligase, cytoplasmic"/>
    <property type="match status" value="1"/>
</dbReference>
<dbReference type="FunFam" id="3.40.50.620:FF:000084">
    <property type="entry name" value="arginine--tRNA ligase, cytoplasmic"/>
    <property type="match status" value="1"/>
</dbReference>
<dbReference type="Gene3D" id="3.30.1360.70">
    <property type="entry name" value="Arginyl tRNA synthetase N-terminal domain"/>
    <property type="match status" value="1"/>
</dbReference>
<dbReference type="Gene3D" id="3.40.50.620">
    <property type="entry name" value="HUPs"/>
    <property type="match status" value="1"/>
</dbReference>
<dbReference type="Gene3D" id="1.10.730.10">
    <property type="entry name" value="Isoleucyl-tRNA Synthetase, Domain 1"/>
    <property type="match status" value="1"/>
</dbReference>
<dbReference type="HAMAP" id="MF_00123">
    <property type="entry name" value="Arg_tRNA_synth"/>
    <property type="match status" value="1"/>
</dbReference>
<dbReference type="InterPro" id="IPR001412">
    <property type="entry name" value="aa-tRNA-synth_I_CS"/>
</dbReference>
<dbReference type="InterPro" id="IPR001278">
    <property type="entry name" value="Arg-tRNA-ligase"/>
</dbReference>
<dbReference type="InterPro" id="IPR005148">
    <property type="entry name" value="Arg-tRNA-synth_N"/>
</dbReference>
<dbReference type="InterPro" id="IPR036695">
    <property type="entry name" value="Arg-tRNA-synth_N_sf"/>
</dbReference>
<dbReference type="InterPro" id="IPR035684">
    <property type="entry name" value="ArgRS_core"/>
</dbReference>
<dbReference type="InterPro" id="IPR008909">
    <property type="entry name" value="DALR_anticod-bd"/>
</dbReference>
<dbReference type="InterPro" id="IPR014729">
    <property type="entry name" value="Rossmann-like_a/b/a_fold"/>
</dbReference>
<dbReference type="InterPro" id="IPR009080">
    <property type="entry name" value="tRNAsynth_Ia_anticodon-bd"/>
</dbReference>
<dbReference type="NCBIfam" id="TIGR00456">
    <property type="entry name" value="argS"/>
    <property type="match status" value="1"/>
</dbReference>
<dbReference type="PANTHER" id="PTHR11956:SF5">
    <property type="entry name" value="ARGININE--TRNA LIGASE, CYTOPLASMIC"/>
    <property type="match status" value="1"/>
</dbReference>
<dbReference type="PANTHER" id="PTHR11956">
    <property type="entry name" value="ARGINYL-TRNA SYNTHETASE"/>
    <property type="match status" value="1"/>
</dbReference>
<dbReference type="Pfam" id="PF03485">
    <property type="entry name" value="Arg_tRNA_synt_N"/>
    <property type="match status" value="1"/>
</dbReference>
<dbReference type="Pfam" id="PF05746">
    <property type="entry name" value="DALR_1"/>
    <property type="match status" value="1"/>
</dbReference>
<dbReference type="Pfam" id="PF00750">
    <property type="entry name" value="tRNA-synt_1d"/>
    <property type="match status" value="1"/>
</dbReference>
<dbReference type="PRINTS" id="PR01038">
    <property type="entry name" value="TRNASYNTHARG"/>
</dbReference>
<dbReference type="SMART" id="SM01016">
    <property type="entry name" value="Arg_tRNA_synt_N"/>
    <property type="match status" value="1"/>
</dbReference>
<dbReference type="SMART" id="SM00836">
    <property type="entry name" value="DALR_1"/>
    <property type="match status" value="1"/>
</dbReference>
<dbReference type="SUPFAM" id="SSF47323">
    <property type="entry name" value="Anticodon-binding domain of a subclass of class I aminoacyl-tRNA synthetases"/>
    <property type="match status" value="1"/>
</dbReference>
<dbReference type="SUPFAM" id="SSF55190">
    <property type="entry name" value="Arginyl-tRNA synthetase (ArgRS), N-terminal 'additional' domain"/>
    <property type="match status" value="1"/>
</dbReference>
<dbReference type="SUPFAM" id="SSF52374">
    <property type="entry name" value="Nucleotidylyl transferase"/>
    <property type="match status" value="1"/>
</dbReference>
<dbReference type="PROSITE" id="PS00178">
    <property type="entry name" value="AA_TRNA_LIGASE_I"/>
    <property type="match status" value="1"/>
</dbReference>
<evidence type="ECO:0000250" key="1">
    <source>
        <dbReference type="UniProtKB" id="P54136"/>
    </source>
</evidence>
<evidence type="ECO:0000250" key="2">
    <source>
        <dbReference type="UniProtKB" id="Q05506"/>
    </source>
</evidence>
<evidence type="ECO:0000305" key="3"/>
<protein>
    <recommendedName>
        <fullName>Arginine--tRNA ligase, cytoplasmic</fullName>
        <ecNumber evidence="1">6.1.1.19</ecNumber>
    </recommendedName>
    <alternativeName>
        <fullName>Arginyl-tRNA synthetase</fullName>
        <shortName>ArgRS</shortName>
    </alternativeName>
</protein>
<organism>
    <name type="scientific">Cricetulus griseus</name>
    <name type="common">Chinese hamster</name>
    <name type="synonym">Cricetulus barabensis griseus</name>
    <dbReference type="NCBI Taxonomy" id="10029"/>
    <lineage>
        <taxon>Eukaryota</taxon>
        <taxon>Metazoa</taxon>
        <taxon>Chordata</taxon>
        <taxon>Craniata</taxon>
        <taxon>Vertebrata</taxon>
        <taxon>Euteleostomi</taxon>
        <taxon>Mammalia</taxon>
        <taxon>Eutheria</taxon>
        <taxon>Euarchontoglires</taxon>
        <taxon>Glires</taxon>
        <taxon>Rodentia</taxon>
        <taxon>Myomorpha</taxon>
        <taxon>Muroidea</taxon>
        <taxon>Cricetidae</taxon>
        <taxon>Cricetinae</taxon>
        <taxon>Cricetulus</taxon>
    </lineage>
</organism>
<comment type="function">
    <text evidence="1">Forms part of a macromolecular complex that catalyzes the attachment of specific amino acids to cognate tRNAs during protein synthesis. Modulates the secretion of AIMP1 and may be involved in generation of the inflammatory cytokine EMAP2 from AIMP1.</text>
</comment>
<comment type="catalytic activity">
    <reaction evidence="1">
        <text>tRNA(Arg) + L-arginine + ATP = L-arginyl-tRNA(Arg) + AMP + diphosphate</text>
        <dbReference type="Rhea" id="RHEA:20301"/>
        <dbReference type="Rhea" id="RHEA-COMP:9658"/>
        <dbReference type="Rhea" id="RHEA-COMP:9673"/>
        <dbReference type="ChEBI" id="CHEBI:30616"/>
        <dbReference type="ChEBI" id="CHEBI:32682"/>
        <dbReference type="ChEBI" id="CHEBI:33019"/>
        <dbReference type="ChEBI" id="CHEBI:78442"/>
        <dbReference type="ChEBI" id="CHEBI:78513"/>
        <dbReference type="ChEBI" id="CHEBI:456215"/>
        <dbReference type="EC" id="6.1.1.19"/>
    </reaction>
</comment>
<comment type="subunit">
    <text evidence="1">Interacts (via N-terminus) with AIMP1 (via N-terminus); this stimulates its catalytic activity. Interacts (via N-terminus) with LARS2 (via C-terminus). Monomer. Part of a multisubunit complex that groups tRNA ligases for Arg (RARS1), Asp (DARS1), Gln (QARS1), Ile (IARS1), Leu (LARS1), Lys (KARS1), Met (MARS1) the bifunctional ligase for Glu and Pro (EPRS1) and the auxiliary subunits AIMP1/p43, AIMP2/p38 and EEF1E1/p18. Interacts with QARS1. Part of a complex composed of RARS1, QARS1 and AIMP1.</text>
</comment>
<comment type="subcellular location">
    <subcellularLocation>
        <location evidence="1">Cytoplasm</location>
    </subcellularLocation>
    <subcellularLocation>
        <location evidence="1">Cytoplasm</location>
        <location evidence="1">Cytosol</location>
    </subcellularLocation>
</comment>
<comment type="alternative products">
    <event type="alternative initiation"/>
    <isoform>
        <id>P37880-1</id>
        <name>Complexed</name>
        <sequence type="displayed"/>
    </isoform>
    <isoform>
        <id>P37880-2</id>
        <name>Monomeric</name>
        <name>Free</name>
        <sequence type="described" ref="VSP_018904"/>
    </isoform>
</comment>
<comment type="domain">
    <text evidence="1">The alpha-helical N-terminus (residues 1-72) mediates interaction with AIMP1 and thereby contributes to the assembly of the multisynthetase complex.</text>
</comment>
<comment type="miscellaneous">
    <molecule>Isoform Monomeric</molecule>
    <text evidence="3">The alternative initiation site Met-74 is uncertain.</text>
</comment>
<comment type="similarity">
    <text evidence="3">Belongs to the class-I aminoacyl-tRNA synthetase family.</text>
</comment>
<keyword id="KW-0007">Acetylation</keyword>
<keyword id="KW-0024">Alternative initiation</keyword>
<keyword id="KW-0030">Aminoacyl-tRNA synthetase</keyword>
<keyword id="KW-0067">ATP-binding</keyword>
<keyword id="KW-0963">Cytoplasm</keyword>
<keyword id="KW-0436">Ligase</keyword>
<keyword id="KW-0547">Nucleotide-binding</keyword>
<keyword id="KW-0648">Protein biosynthesis</keyword>
<sequence length="661" mass="75602">MDGLVAQCSARLLQQEKEIKSLTAEIDRLKNCGHLEDSPSLDQLREENLKLKYRLNILQRSLQAEKRRRPTKNMININSRLQDVFGCAIKAAYPDLDNPPLVVTPSQQPKFGDYQCNSAMGISQMLKAKEQKVNPRGIAENITKHLPNNEYIDRVEIAGPGFINVHLRKDFVSEQLTNLLVNGIQLPALGENKKVIVDFSSPNIAKEMHVGHLRSTIIGESMSRLFEFAGYDVLRLNHVGDWGTQFGMLIAHLQDQFPDYLTVSPPIGDLQAFYKESKKRFDTEEEFKKRAYQCVVSLQSKDPDFIKAWNLICDVSRAEFNKIYDALDITLIERGESFYQDRMKDIVKEFEDKGYVQVDDGRKIVFVPGCSIPLTIVKSDGGFTYDTSDLAAIKQRLFEEKANKIIYVVDNGQAVHFQTIFAAAQMIGWYDPKVTQVTHVGFGVVLGEDKKKFKTRSGETVRLVDLLGEGLKRSMDKLKEKERDKVLTEEELTAAQTSIAYGCIKYADLSHNRLNDYIFSFDKMLDDRGNTAAYLLYAFTRIRSIARLANVDEEMLQKAARETKIVLDHEKEWKLGRCILRFPEILQKMLDDLFLHTLCDYIYELATTFTEFYDSCYCVEKDRQTGKVLKVNMWRMLLCEAVAAVMAKGFDILGIKPVQRM</sequence>
<gene>
    <name type="primary">RARS1</name>
    <name type="synonym">RARS</name>
    <name type="synonym">RRS1</name>
</gene>
<feature type="chain" id="PRO_0000035795" description="Arginine--tRNA ligase, cytoplasmic">
    <location>
        <begin position="1"/>
        <end position="661"/>
    </location>
</feature>
<feature type="region of interest" description="Could be involved in the assembly of the multisynthetase complex">
    <location>
        <begin position="1"/>
        <end position="73"/>
    </location>
</feature>
<feature type="region of interest" description="Interaction with tRNA" evidence="2">
    <location>
        <begin position="530"/>
        <end position="544"/>
    </location>
</feature>
<feature type="short sequence motif" description="'HIGH' region">
    <location>
        <begin position="202"/>
        <end position="213"/>
    </location>
</feature>
<feature type="binding site" evidence="1">
    <location>
        <begin position="201"/>
        <end position="203"/>
    </location>
    <ligand>
        <name>L-arginine</name>
        <dbReference type="ChEBI" id="CHEBI:32682"/>
    </ligand>
</feature>
<feature type="binding site" evidence="1">
    <location>
        <position position="212"/>
    </location>
    <ligand>
        <name>L-arginine</name>
        <dbReference type="ChEBI" id="CHEBI:32682"/>
    </ligand>
</feature>
<feature type="binding site" evidence="1">
    <location>
        <position position="385"/>
    </location>
    <ligand>
        <name>L-arginine</name>
        <dbReference type="ChEBI" id="CHEBI:32682"/>
    </ligand>
</feature>
<feature type="binding site" evidence="1">
    <location>
        <position position="389"/>
    </location>
    <ligand>
        <name>L-arginine</name>
        <dbReference type="ChEBI" id="CHEBI:32682"/>
    </ligand>
</feature>
<feature type="binding site" evidence="1">
    <location>
        <position position="413"/>
    </location>
    <ligand>
        <name>L-arginine</name>
        <dbReference type="ChEBI" id="CHEBI:32682"/>
    </ligand>
</feature>
<feature type="modified residue" description="N-acetylmethionine" evidence="1">
    <location>
        <position position="1"/>
    </location>
</feature>
<feature type="splice variant" id="VSP_018904" description="In isoform Monomeric." evidence="3">
    <location>
        <begin position="1"/>
        <end position="73"/>
    </location>
</feature>
<name>SYRC_CRIGR</name>
<reference key="1">
    <citation type="journal article" date="1993" name="Gene">
        <title>Cloning and analysis of a cDNA encoding mammalian arginyl-tRNA synthetase, a component of the multisynthetase complex with a hydrophobic N-terminal extension.</title>
        <authorList>
            <person name="Lazard M."/>
            <person name="Mirande M."/>
        </authorList>
    </citation>
    <scope>NUCLEOTIDE SEQUENCE [MRNA]</scope>
    <source>
        <tissue>Ovary</tissue>
    </source>
</reference>
<proteinExistence type="evidence at transcript level"/>